<sequence length="318" mass="36062">MPENLEIRPSSFENFIGQKKLVETLQILISSSQKRKQSLDHILFYGPPGTGKTTLANIVANVLEAKIKYVQGPLLEKKSDVLAVLANISPDTIIFIDEIHGINKNIEELLYSAMEEFVIDLQIGVDGERKIMRMKLPQFTLIGASTKLAQISTPLQNRFGYVAKIVDYTLEDMIQIIRNSSAVLKLKMNTEIIKYIASFSNNTPRIANNLLKRIRDFALVLNAKRIDKDIVNKTFDSIGIYNQGLSQINIEYLNLLVKIFKGKSVALDVIANVLKEHRQTIINIIEPPLIEKELIEKTSRGRRITKKGRDYLLELKTN</sequence>
<evidence type="ECO:0000255" key="1">
    <source>
        <dbReference type="HAMAP-Rule" id="MF_00016"/>
    </source>
</evidence>
<protein>
    <recommendedName>
        <fullName evidence="1">Holliday junction branch migration complex subunit RuvB</fullName>
        <ecNumber evidence="1">3.6.4.-</ecNumber>
    </recommendedName>
</protein>
<accession>Q4A9R6</accession>
<name>RUVB_MESHJ</name>
<keyword id="KW-0067">ATP-binding</keyword>
<keyword id="KW-0963">Cytoplasm</keyword>
<keyword id="KW-0227">DNA damage</keyword>
<keyword id="KW-0233">DNA recombination</keyword>
<keyword id="KW-0234">DNA repair</keyword>
<keyword id="KW-0238">DNA-binding</keyword>
<keyword id="KW-0378">Hydrolase</keyword>
<keyword id="KW-0547">Nucleotide-binding</keyword>
<gene>
    <name evidence="1" type="primary">ruvB</name>
    <name type="ordered locus">MHJ_0419</name>
</gene>
<dbReference type="EC" id="3.6.4.-" evidence="1"/>
<dbReference type="EMBL" id="AE017243">
    <property type="protein sequence ID" value="AAZ44505.2"/>
    <property type="molecule type" value="Genomic_DNA"/>
</dbReference>
<dbReference type="RefSeq" id="WP_011206256.1">
    <property type="nucleotide sequence ID" value="NC_007295.1"/>
</dbReference>
<dbReference type="SMR" id="Q4A9R6"/>
<dbReference type="GeneID" id="41334720"/>
<dbReference type="KEGG" id="mhj:MHJ_0419"/>
<dbReference type="eggNOG" id="COG2255">
    <property type="taxonomic scope" value="Bacteria"/>
</dbReference>
<dbReference type="HOGENOM" id="CLU_055599_1_0_14"/>
<dbReference type="OrthoDB" id="9804478at2"/>
<dbReference type="Proteomes" id="UP000000548">
    <property type="component" value="Chromosome"/>
</dbReference>
<dbReference type="GO" id="GO:0005737">
    <property type="term" value="C:cytoplasm"/>
    <property type="evidence" value="ECO:0007669"/>
    <property type="project" value="UniProtKB-SubCell"/>
</dbReference>
<dbReference type="GO" id="GO:0048476">
    <property type="term" value="C:Holliday junction resolvase complex"/>
    <property type="evidence" value="ECO:0007669"/>
    <property type="project" value="UniProtKB-UniRule"/>
</dbReference>
<dbReference type="GO" id="GO:0005524">
    <property type="term" value="F:ATP binding"/>
    <property type="evidence" value="ECO:0007669"/>
    <property type="project" value="UniProtKB-UniRule"/>
</dbReference>
<dbReference type="GO" id="GO:0016887">
    <property type="term" value="F:ATP hydrolysis activity"/>
    <property type="evidence" value="ECO:0007669"/>
    <property type="project" value="InterPro"/>
</dbReference>
<dbReference type="GO" id="GO:0000400">
    <property type="term" value="F:four-way junction DNA binding"/>
    <property type="evidence" value="ECO:0007669"/>
    <property type="project" value="UniProtKB-UniRule"/>
</dbReference>
<dbReference type="GO" id="GO:0009378">
    <property type="term" value="F:four-way junction helicase activity"/>
    <property type="evidence" value="ECO:0007669"/>
    <property type="project" value="InterPro"/>
</dbReference>
<dbReference type="GO" id="GO:0006310">
    <property type="term" value="P:DNA recombination"/>
    <property type="evidence" value="ECO:0007669"/>
    <property type="project" value="UniProtKB-UniRule"/>
</dbReference>
<dbReference type="GO" id="GO:0006281">
    <property type="term" value="P:DNA repair"/>
    <property type="evidence" value="ECO:0007669"/>
    <property type="project" value="UniProtKB-UniRule"/>
</dbReference>
<dbReference type="CDD" id="cd00009">
    <property type="entry name" value="AAA"/>
    <property type="match status" value="1"/>
</dbReference>
<dbReference type="Gene3D" id="1.10.8.60">
    <property type="match status" value="1"/>
</dbReference>
<dbReference type="Gene3D" id="3.40.50.300">
    <property type="entry name" value="P-loop containing nucleotide triphosphate hydrolases"/>
    <property type="match status" value="1"/>
</dbReference>
<dbReference type="Gene3D" id="1.10.10.10">
    <property type="entry name" value="Winged helix-like DNA-binding domain superfamily/Winged helix DNA-binding domain"/>
    <property type="match status" value="1"/>
</dbReference>
<dbReference type="HAMAP" id="MF_00016">
    <property type="entry name" value="DNA_HJ_migration_RuvB"/>
    <property type="match status" value="1"/>
</dbReference>
<dbReference type="InterPro" id="IPR003593">
    <property type="entry name" value="AAA+_ATPase"/>
</dbReference>
<dbReference type="InterPro" id="IPR041445">
    <property type="entry name" value="AAA_lid_4"/>
</dbReference>
<dbReference type="InterPro" id="IPR000641">
    <property type="entry name" value="CbxX/CfxQ"/>
</dbReference>
<dbReference type="InterPro" id="IPR004605">
    <property type="entry name" value="DNA_helicase_Holl-junc_RuvB"/>
</dbReference>
<dbReference type="InterPro" id="IPR027417">
    <property type="entry name" value="P-loop_NTPase"/>
</dbReference>
<dbReference type="InterPro" id="IPR008824">
    <property type="entry name" value="RuvB-like_N"/>
</dbReference>
<dbReference type="InterPro" id="IPR008823">
    <property type="entry name" value="RuvB_C"/>
</dbReference>
<dbReference type="InterPro" id="IPR036388">
    <property type="entry name" value="WH-like_DNA-bd_sf"/>
</dbReference>
<dbReference type="InterPro" id="IPR036390">
    <property type="entry name" value="WH_DNA-bd_sf"/>
</dbReference>
<dbReference type="NCBIfam" id="NF000868">
    <property type="entry name" value="PRK00080.1"/>
    <property type="match status" value="1"/>
</dbReference>
<dbReference type="NCBIfam" id="TIGR00635">
    <property type="entry name" value="ruvB"/>
    <property type="match status" value="1"/>
</dbReference>
<dbReference type="PANTHER" id="PTHR42848">
    <property type="match status" value="1"/>
</dbReference>
<dbReference type="PANTHER" id="PTHR42848:SF1">
    <property type="entry name" value="HOLLIDAY JUNCTION BRANCH MIGRATION COMPLEX SUBUNIT RUVB"/>
    <property type="match status" value="1"/>
</dbReference>
<dbReference type="Pfam" id="PF17864">
    <property type="entry name" value="AAA_lid_4"/>
    <property type="match status" value="1"/>
</dbReference>
<dbReference type="Pfam" id="PF05491">
    <property type="entry name" value="RuvB_C"/>
    <property type="match status" value="1"/>
</dbReference>
<dbReference type="Pfam" id="PF05496">
    <property type="entry name" value="RuvB_N"/>
    <property type="match status" value="1"/>
</dbReference>
<dbReference type="PRINTS" id="PR00819">
    <property type="entry name" value="CBXCFQXSUPER"/>
</dbReference>
<dbReference type="SMART" id="SM00382">
    <property type="entry name" value="AAA"/>
    <property type="match status" value="1"/>
</dbReference>
<dbReference type="SUPFAM" id="SSF52540">
    <property type="entry name" value="P-loop containing nucleoside triphosphate hydrolases"/>
    <property type="match status" value="1"/>
</dbReference>
<dbReference type="SUPFAM" id="SSF46785">
    <property type="entry name" value="Winged helix' DNA-binding domain"/>
    <property type="match status" value="1"/>
</dbReference>
<reference key="1">
    <citation type="journal article" date="2005" name="J. Bacteriol.">
        <title>Swine and poultry pathogens: the complete genome sequences of two strains of Mycoplasma hyopneumoniae and a strain of Mycoplasma synoviae.</title>
        <authorList>
            <person name="Vasconcelos A.T.R."/>
            <person name="Ferreira H.B."/>
            <person name="Bizarro C.V."/>
            <person name="Bonatto S.L."/>
            <person name="Carvalho M.O."/>
            <person name="Pinto P.M."/>
            <person name="Almeida D.F."/>
            <person name="Almeida L.G.P."/>
            <person name="Almeida R."/>
            <person name="Alves-Junior L."/>
            <person name="Assuncao E.N."/>
            <person name="Azevedo V.A.C."/>
            <person name="Bogo M.R."/>
            <person name="Brigido M.M."/>
            <person name="Brocchi M."/>
            <person name="Burity H.A."/>
            <person name="Camargo A.A."/>
            <person name="Camargo S.S."/>
            <person name="Carepo M.S."/>
            <person name="Carraro D.M."/>
            <person name="de Mattos Cascardo J.C."/>
            <person name="Castro L.A."/>
            <person name="Cavalcanti G."/>
            <person name="Chemale G."/>
            <person name="Collevatti R.G."/>
            <person name="Cunha C.W."/>
            <person name="Dallagiovanna B."/>
            <person name="Dambros B.P."/>
            <person name="Dellagostin O.A."/>
            <person name="Falcao C."/>
            <person name="Fantinatti-Garboggini F."/>
            <person name="Felipe M.S.S."/>
            <person name="Fiorentin L."/>
            <person name="Franco G.R."/>
            <person name="Freitas N.S.A."/>
            <person name="Frias D."/>
            <person name="Grangeiro T.B."/>
            <person name="Grisard E.C."/>
            <person name="Guimaraes C.T."/>
            <person name="Hungria M."/>
            <person name="Jardim S.N."/>
            <person name="Krieger M.A."/>
            <person name="Laurino J.P."/>
            <person name="Lima L.F.A."/>
            <person name="Lopes M.I."/>
            <person name="Loreto E.L.S."/>
            <person name="Madeira H.M.F."/>
            <person name="Manfio G.P."/>
            <person name="Maranhao A.Q."/>
            <person name="Martinkovics C.T."/>
            <person name="Medeiros S.R.B."/>
            <person name="Moreira M.A.M."/>
            <person name="Neiva M."/>
            <person name="Ramalho-Neto C.E."/>
            <person name="Nicolas M.F."/>
            <person name="Oliveira S.C."/>
            <person name="Paixao R.F.C."/>
            <person name="Pedrosa F.O."/>
            <person name="Pena S.D.J."/>
            <person name="Pereira M."/>
            <person name="Pereira-Ferrari L."/>
            <person name="Piffer I."/>
            <person name="Pinto L.S."/>
            <person name="Potrich D.P."/>
            <person name="Salim A.C.M."/>
            <person name="Santos F.R."/>
            <person name="Schmitt R."/>
            <person name="Schneider M.P.C."/>
            <person name="Schrank A."/>
            <person name="Schrank I.S."/>
            <person name="Schuck A.F."/>
            <person name="Seuanez H.N."/>
            <person name="Silva D.W."/>
            <person name="Silva R."/>
            <person name="Silva S.C."/>
            <person name="Soares C.M.A."/>
            <person name="Souza K.R.L."/>
            <person name="Souza R.C."/>
            <person name="Staats C.C."/>
            <person name="Steffens M.B.R."/>
            <person name="Teixeira S.M.R."/>
            <person name="Urmenyi T.P."/>
            <person name="Vainstein M.H."/>
            <person name="Zuccherato L.W."/>
            <person name="Simpson A.J.G."/>
            <person name="Zaha A."/>
        </authorList>
    </citation>
    <scope>NUCLEOTIDE SEQUENCE [LARGE SCALE GENOMIC DNA]</scope>
    <source>
        <strain>J / ATCC 25934 / NCTC 10110</strain>
    </source>
</reference>
<feature type="chain" id="PRO_0000235380" description="Holliday junction branch migration complex subunit RuvB">
    <location>
        <begin position="1"/>
        <end position="318"/>
    </location>
</feature>
<feature type="region of interest" description="Large ATPase domain (RuvB-L)" evidence="1">
    <location>
        <begin position="1"/>
        <end position="168"/>
    </location>
</feature>
<feature type="region of interest" description="Small ATPAse domain (RuvB-S)" evidence="1">
    <location>
        <begin position="169"/>
        <end position="239"/>
    </location>
</feature>
<feature type="region of interest" description="Head domain (RuvB-H)" evidence="1">
    <location>
        <begin position="242"/>
        <end position="318"/>
    </location>
</feature>
<feature type="binding site" evidence="1">
    <location>
        <position position="7"/>
    </location>
    <ligand>
        <name>ATP</name>
        <dbReference type="ChEBI" id="CHEBI:30616"/>
    </ligand>
</feature>
<feature type="binding site" evidence="1">
    <location>
        <position position="8"/>
    </location>
    <ligand>
        <name>ATP</name>
        <dbReference type="ChEBI" id="CHEBI:30616"/>
    </ligand>
</feature>
<feature type="binding site" evidence="1">
    <location>
        <position position="49"/>
    </location>
    <ligand>
        <name>ATP</name>
        <dbReference type="ChEBI" id="CHEBI:30616"/>
    </ligand>
</feature>
<feature type="binding site" evidence="1">
    <location>
        <position position="52"/>
    </location>
    <ligand>
        <name>ATP</name>
        <dbReference type="ChEBI" id="CHEBI:30616"/>
    </ligand>
</feature>
<feature type="binding site" evidence="1">
    <location>
        <position position="53"/>
    </location>
    <ligand>
        <name>ATP</name>
        <dbReference type="ChEBI" id="CHEBI:30616"/>
    </ligand>
</feature>
<feature type="binding site" evidence="1">
    <location>
        <position position="53"/>
    </location>
    <ligand>
        <name>Mg(2+)</name>
        <dbReference type="ChEBI" id="CHEBI:18420"/>
    </ligand>
</feature>
<feature type="binding site" evidence="1">
    <location>
        <position position="54"/>
    </location>
    <ligand>
        <name>ATP</name>
        <dbReference type="ChEBI" id="CHEBI:30616"/>
    </ligand>
</feature>
<feature type="binding site" evidence="1">
    <location>
        <position position="158"/>
    </location>
    <ligand>
        <name>ATP</name>
        <dbReference type="ChEBI" id="CHEBI:30616"/>
    </ligand>
</feature>
<feature type="binding site" evidence="1">
    <location>
        <position position="168"/>
    </location>
    <ligand>
        <name>ATP</name>
        <dbReference type="ChEBI" id="CHEBI:30616"/>
    </ligand>
</feature>
<feature type="binding site" evidence="1">
    <location>
        <position position="205"/>
    </location>
    <ligand>
        <name>ATP</name>
        <dbReference type="ChEBI" id="CHEBI:30616"/>
    </ligand>
</feature>
<feature type="binding site" evidence="1">
    <location>
        <position position="278"/>
    </location>
    <ligand>
        <name>DNA</name>
        <dbReference type="ChEBI" id="CHEBI:16991"/>
    </ligand>
</feature>
<feature type="binding site" evidence="1">
    <location>
        <position position="297"/>
    </location>
    <ligand>
        <name>DNA</name>
        <dbReference type="ChEBI" id="CHEBI:16991"/>
    </ligand>
</feature>
<feature type="binding site" evidence="1">
    <location>
        <position position="302"/>
    </location>
    <ligand>
        <name>DNA</name>
        <dbReference type="ChEBI" id="CHEBI:16991"/>
    </ligand>
</feature>
<organism>
    <name type="scientific">Mesomycoplasma hyopneumoniae (strain J / ATCC 25934 / NCTC 10110)</name>
    <name type="common">Mycoplasma hyopneumoniae</name>
    <dbReference type="NCBI Taxonomy" id="262719"/>
    <lineage>
        <taxon>Bacteria</taxon>
        <taxon>Bacillati</taxon>
        <taxon>Mycoplasmatota</taxon>
        <taxon>Mycoplasmoidales</taxon>
        <taxon>Metamycoplasmataceae</taxon>
        <taxon>Mesomycoplasma</taxon>
    </lineage>
</organism>
<proteinExistence type="inferred from homology"/>
<comment type="function">
    <text evidence="1">The RuvA-RuvB-RuvC complex processes Holliday junction (HJ) DNA during genetic recombination and DNA repair, while the RuvA-RuvB complex plays an important role in the rescue of blocked DNA replication forks via replication fork reversal (RFR). RuvA specifically binds to HJ cruciform DNA, conferring on it an open structure. The RuvB hexamer acts as an ATP-dependent pump, pulling dsDNA into and through the RuvAB complex. RuvB forms 2 homohexamers on either side of HJ DNA bound by 1 or 2 RuvA tetramers; 4 subunits per hexamer contact DNA at a time. Coordinated motions by a converter formed by DNA-disengaged RuvB subunits stimulates ATP hydrolysis and nucleotide exchange. Immobilization of the converter enables RuvB to convert the ATP-contained energy into a lever motion, pulling 2 nucleotides of DNA out of the RuvA tetramer per ATP hydrolyzed, thus driving DNA branch migration. The RuvB motors rotate together with the DNA substrate, which together with the progressing nucleotide cycle form the mechanistic basis for DNA recombination by continuous HJ branch migration. Branch migration allows RuvC to scan DNA until it finds its consensus sequence, where it cleaves and resolves cruciform DNA.</text>
</comment>
<comment type="catalytic activity">
    <reaction evidence="1">
        <text>ATP + H2O = ADP + phosphate + H(+)</text>
        <dbReference type="Rhea" id="RHEA:13065"/>
        <dbReference type="ChEBI" id="CHEBI:15377"/>
        <dbReference type="ChEBI" id="CHEBI:15378"/>
        <dbReference type="ChEBI" id="CHEBI:30616"/>
        <dbReference type="ChEBI" id="CHEBI:43474"/>
        <dbReference type="ChEBI" id="CHEBI:456216"/>
    </reaction>
</comment>
<comment type="subunit">
    <text evidence="1">Homohexamer. Forms an RuvA(8)-RuvB(12)-Holliday junction (HJ) complex. HJ DNA is sandwiched between 2 RuvA tetramers; dsDNA enters through RuvA and exits via RuvB. An RuvB hexamer assembles on each DNA strand where it exits the tetramer. Each RuvB hexamer is contacted by two RuvA subunits (via domain III) on 2 adjacent RuvB subunits; this complex drives branch migration. In the full resolvosome a probable DNA-RuvA(4)-RuvB(12)-RuvC(2) complex forms which resolves the HJ.</text>
</comment>
<comment type="subcellular location">
    <subcellularLocation>
        <location evidence="1">Cytoplasm</location>
    </subcellularLocation>
</comment>
<comment type="domain">
    <text evidence="1">Has 3 domains, the large (RuvB-L) and small ATPase (RuvB-S) domains and the C-terminal head (RuvB-H) domain. The head domain binds DNA, while the ATPase domains jointly bind ATP, ADP or are empty depending on the state of the subunit in the translocation cycle. During a single DNA translocation step the structure of each domain remains the same, but their relative positions change.</text>
</comment>
<comment type="similarity">
    <text evidence="1">Belongs to the RuvB family.</text>
</comment>